<keyword id="KW-1003">Cell membrane</keyword>
<keyword id="KW-0418">Kinase</keyword>
<keyword id="KW-0472">Membrane</keyword>
<keyword id="KW-0598">Phosphotransferase system</keyword>
<keyword id="KW-0762">Sugar transport</keyword>
<keyword id="KW-0808">Transferase</keyword>
<keyword id="KW-0812">Transmembrane</keyword>
<keyword id="KW-1133">Transmembrane helix</keyword>
<keyword id="KW-0813">Transport</keyword>
<reference key="1">
    <citation type="journal article" date="2002" name="Microbiology">
        <title>Metabolism of sucrose and its five isomers by Fusobacterium mortiferum.</title>
        <authorList>
            <person name="Pikis A."/>
            <person name="Immel S."/>
            <person name="Robrish S.A."/>
            <person name="Thompson J."/>
        </authorList>
    </citation>
    <scope>NUCLEOTIDE SEQUENCE [GENOMIC DNA]</scope>
    <source>
        <strain>ATCC 25557 / DSM 19809 / CCUG 14475 / VPI 4123A</strain>
    </source>
</reference>
<reference key="2">
    <citation type="journal article" date="1997" name="J. Bacteriol.">
        <title>6-phospho-alpha-D-glucosidase from Fusobacterium mortiferum: cloning, expression, and assignment to family 4 of the glycosylhydrolases.</title>
        <authorList>
            <person name="Bouma C.L."/>
            <person name="Reizer J."/>
            <person name="Reizer A."/>
            <person name="Robrish S.A."/>
            <person name="Thompson J."/>
        </authorList>
    </citation>
    <scope>NUCLEOTIDE SEQUENCE [GENOMIC DNA] OF 443-526</scope>
    <source>
        <strain>ATCC 25557 / DSM 19809 / CCUG 14475 / VPI 4123A</strain>
    </source>
</reference>
<comment type="function">
    <text>The phosphoenolpyruvate-dependent sugar phosphotransferase system (sugar PTS), a major carbohydrate active -transport system, catalyzes the phosphorylation of incoming sugar substrates concomitantly with their translocation across the cell membrane. This system is involved in alpha-glucoside transport.</text>
</comment>
<comment type="subcellular location">
    <subcellularLocation>
        <location evidence="3">Cell membrane</location>
        <topology evidence="3">Multi-pass membrane protein</topology>
    </subcellularLocation>
</comment>
<comment type="domain">
    <text>The EIIC domain forms the PTS system translocation channel and contains the specific substrate-binding site.</text>
</comment>
<comment type="domain">
    <text>The EIIB domain is phosphorylated by phospho-EIIA on a cysteinyl or histidyl residue, depending on the transported sugar. Then, it transfers the phosphoryl group to the sugar substrate concomitantly with the sugar uptake processed by the EIIC domain.</text>
</comment>
<gene>
    <name type="primary">malB</name>
</gene>
<dbReference type="EC" id="2.7.1.-"/>
<dbReference type="EMBL" id="U81185">
    <property type="protein sequence ID" value="AAB63014.2"/>
    <property type="molecule type" value="Genomic_DNA"/>
</dbReference>
<dbReference type="SMR" id="O06900"/>
<dbReference type="TCDB" id="4.A.1.1.4">
    <property type="family name" value="the pts glucose-glucoside (glc) family"/>
</dbReference>
<dbReference type="GO" id="GO:0005886">
    <property type="term" value="C:plasma membrane"/>
    <property type="evidence" value="ECO:0007669"/>
    <property type="project" value="UniProtKB-SubCell"/>
</dbReference>
<dbReference type="GO" id="GO:0016301">
    <property type="term" value="F:kinase activity"/>
    <property type="evidence" value="ECO:0007669"/>
    <property type="project" value="UniProtKB-KW"/>
</dbReference>
<dbReference type="GO" id="GO:0008982">
    <property type="term" value="F:protein-N(PI)-phosphohistidine-sugar phosphotransferase activity"/>
    <property type="evidence" value="ECO:0007669"/>
    <property type="project" value="InterPro"/>
</dbReference>
<dbReference type="GO" id="GO:0090563">
    <property type="term" value="F:protein-phosphocysteine-sugar phosphotransferase activity"/>
    <property type="evidence" value="ECO:0007669"/>
    <property type="project" value="TreeGrafter"/>
</dbReference>
<dbReference type="GO" id="GO:0009401">
    <property type="term" value="P:phosphoenolpyruvate-dependent sugar phosphotransferase system"/>
    <property type="evidence" value="ECO:0007669"/>
    <property type="project" value="UniProtKB-KW"/>
</dbReference>
<dbReference type="CDD" id="cd00212">
    <property type="entry name" value="PTS_IIB_glc"/>
    <property type="match status" value="1"/>
</dbReference>
<dbReference type="Gene3D" id="3.30.1360.60">
    <property type="entry name" value="Glucose permease domain IIB"/>
    <property type="match status" value="1"/>
</dbReference>
<dbReference type="InterPro" id="IPR036878">
    <property type="entry name" value="Glu_permease_IIB"/>
</dbReference>
<dbReference type="InterPro" id="IPR018113">
    <property type="entry name" value="PTrfase_EIIB_Cys"/>
</dbReference>
<dbReference type="InterPro" id="IPR003352">
    <property type="entry name" value="PTS_EIIC"/>
</dbReference>
<dbReference type="InterPro" id="IPR013013">
    <property type="entry name" value="PTS_EIIC_1"/>
</dbReference>
<dbReference type="InterPro" id="IPR050429">
    <property type="entry name" value="PTS_Glucose_EIICBA"/>
</dbReference>
<dbReference type="InterPro" id="IPR001996">
    <property type="entry name" value="PTS_IIB_1"/>
</dbReference>
<dbReference type="InterPro" id="IPR010975">
    <property type="entry name" value="PTS_IIBC_a_glc"/>
</dbReference>
<dbReference type="NCBIfam" id="TIGR00826">
    <property type="entry name" value="EIIB_glc"/>
    <property type="match status" value="1"/>
</dbReference>
<dbReference type="NCBIfam" id="TIGR02005">
    <property type="entry name" value="PTS-IIBC-alpha"/>
    <property type="match status" value="1"/>
</dbReference>
<dbReference type="PANTHER" id="PTHR30009">
    <property type="entry name" value="CYTOCHROME C-TYPE SYNTHESIS PROTEIN AND PTS TRANSMEMBRANE COMPONENT"/>
    <property type="match status" value="1"/>
</dbReference>
<dbReference type="PANTHER" id="PTHR30009:SF12">
    <property type="entry name" value="PHOSPHOTRANSFERASE IIC COMPONENT GLVC"/>
    <property type="match status" value="1"/>
</dbReference>
<dbReference type="Pfam" id="PF00367">
    <property type="entry name" value="PTS_EIIB"/>
    <property type="match status" value="1"/>
</dbReference>
<dbReference type="Pfam" id="PF02378">
    <property type="entry name" value="PTS_EIIC"/>
    <property type="match status" value="1"/>
</dbReference>
<dbReference type="SUPFAM" id="SSF55604">
    <property type="entry name" value="Glucose permease domain IIB"/>
    <property type="match status" value="1"/>
</dbReference>
<dbReference type="PROSITE" id="PS51098">
    <property type="entry name" value="PTS_EIIB_TYPE_1"/>
    <property type="match status" value="1"/>
</dbReference>
<dbReference type="PROSITE" id="PS01035">
    <property type="entry name" value="PTS_EIIB_TYPE_1_CYS"/>
    <property type="match status" value="1"/>
</dbReference>
<dbReference type="PROSITE" id="PS51103">
    <property type="entry name" value="PTS_EIIC_TYPE_1"/>
    <property type="match status" value="1"/>
</dbReference>
<proteinExistence type="predicted"/>
<sequence length="526" mass="57313">MLKHFQRLGGALFAPVLLFPFAGLVVALTIILKNPDFVGELANTNGTFYKMITVIEEGGWTVFRQLPLIFAIGLPIGLAKKAHPRACLAVLATYLTYNYFISAILTFWGPSFGVDFTQNVGGVSGLTTIAGIKTLDTSIVGAIVISGITIYIHNKFFDTKLPDFLGTFQGTTLVSAIAFVVMIPCAYITCLVWPKIQMGISSLQALMVTSGTFGVWLYTFLERILIPTGLHHFIYGPFIFGPAVVDTGIQVAWAENLLNFANSTQPLKELFPQGGFALHGNSKIFGCIGIALAMYKTARPEKKKIVSGLLIPAALTAALVGITEPLEFTFLFIAPFLFVVHAVLAATMAAVMYAFGVVKYGSGIIEIAALNWLPLMKNHSGVMFTQLAIGVVFIGIHYLVFKFLIEKYNVKTSGREDEEEETKLYTKADWKAKNGEGKETNSSDLYSGKAKAFLEAFGGKDNIEQVNNCATRLRISVKDEKKVGPDIQFKAAGAHGVVRNGKAFQVIVGLSVPQVRESFENLMEQN</sequence>
<organism>
    <name type="scientific">Fusobacterium mortiferum</name>
    <dbReference type="NCBI Taxonomy" id="850"/>
    <lineage>
        <taxon>Bacteria</taxon>
        <taxon>Fusobacteriati</taxon>
        <taxon>Fusobacteriota</taxon>
        <taxon>Fusobacteriia</taxon>
        <taxon>Fusobacteriales</taxon>
        <taxon>Fusobacteriaceae</taxon>
        <taxon>Fusobacterium</taxon>
    </lineage>
</organism>
<accession>O06900</accession>
<feature type="chain" id="PRO_0000186477" description="PTS system alpha-glucoside-specific EIICB component">
    <location>
        <begin position="1"/>
        <end position="526"/>
    </location>
</feature>
<feature type="transmembrane region" description="Helical" evidence="2">
    <location>
        <begin position="12"/>
        <end position="32"/>
    </location>
</feature>
<feature type="transmembrane region" description="Helical" evidence="2">
    <location>
        <begin position="59"/>
        <end position="79"/>
    </location>
</feature>
<feature type="transmembrane region" description="Helical" evidence="2">
    <location>
        <begin position="88"/>
        <end position="108"/>
    </location>
</feature>
<feature type="transmembrane region" description="Helical" evidence="2">
    <location>
        <begin position="132"/>
        <end position="152"/>
    </location>
</feature>
<feature type="transmembrane region" description="Helical" evidence="2">
    <location>
        <begin position="173"/>
        <end position="193"/>
    </location>
</feature>
<feature type="transmembrane region" description="Helical" evidence="2">
    <location>
        <begin position="200"/>
        <end position="220"/>
    </location>
</feature>
<feature type="transmembrane region" description="Helical" evidence="2">
    <location>
        <begin position="224"/>
        <end position="244"/>
    </location>
</feature>
<feature type="transmembrane region" description="Helical" evidence="2">
    <location>
        <begin position="274"/>
        <end position="294"/>
    </location>
</feature>
<feature type="transmembrane region" description="Helical" evidence="2">
    <location>
        <begin position="305"/>
        <end position="325"/>
    </location>
</feature>
<feature type="transmembrane region" description="Helical" evidence="2">
    <location>
        <begin position="330"/>
        <end position="350"/>
    </location>
</feature>
<feature type="transmembrane region" description="Helical" evidence="2">
    <location>
        <begin position="355"/>
        <end position="375"/>
    </location>
</feature>
<feature type="transmembrane region" description="Helical" evidence="2">
    <location>
        <begin position="381"/>
        <end position="401"/>
    </location>
</feature>
<feature type="domain" description="PTS EIIC type-1" evidence="2">
    <location>
        <begin position="1"/>
        <end position="417"/>
    </location>
</feature>
<feature type="domain" description="PTS EIIB type-1" evidence="1">
    <location>
        <begin position="447"/>
        <end position="526"/>
    </location>
</feature>
<feature type="active site" description="Phosphocysteine intermediate; for EIIB activity" evidence="1">
    <location>
        <position position="469"/>
    </location>
</feature>
<protein>
    <recommendedName>
        <fullName>PTS system alpha-glucoside-specific EIICB component</fullName>
    </recommendedName>
    <domain>
        <recommendedName>
            <fullName>Alpha-glucoside permease IIC component</fullName>
        </recommendedName>
        <alternativeName>
            <fullName>PTS system alpha-glucoside-specific EIIC component</fullName>
        </alternativeName>
    </domain>
    <domain>
        <recommendedName>
            <fullName>Alpha-glucoside-specific phosphotransferase enzyme IIB component</fullName>
            <ecNumber>2.7.1.-</ecNumber>
        </recommendedName>
        <alternativeName>
            <fullName>PTS system alpha-glucoside-specific EIIB component</fullName>
        </alternativeName>
    </domain>
</protein>
<evidence type="ECO:0000255" key="1">
    <source>
        <dbReference type="PROSITE-ProRule" id="PRU00421"/>
    </source>
</evidence>
<evidence type="ECO:0000255" key="2">
    <source>
        <dbReference type="PROSITE-ProRule" id="PRU00426"/>
    </source>
</evidence>
<evidence type="ECO:0000305" key="3"/>
<name>PTUCB_FUSMR</name>